<gene>
    <name evidence="1" type="primary">clpX</name>
    <name type="ordered locus">DR_1973</name>
</gene>
<sequence>MTRATADRCSFCGRQHPQIAQLIEAPGRAAFICNECAERAFDLVKQQRKEAGSEFSLDELPSAKEIKAYLDEFVIGQDEAKKALAVAVVSHYHRLSNPDAGLQKSNILLIGPTGTGKTLLAQSLAEMLEVPFAIADATTLTEAGYVGDDVENVIVRLLQAAEYDVAAAERGIIYVDEIDKIARKSEGTSITRDVSGEGVQQALLKIIEGTVAQVPPQGGRKHPQQELVQVDTRNILFIVGGAFESMSEIARARTNVRAVGFGAEHKGEEKEEVRFLPEDLVKFGLIPEFVGRLPLVVQLQDLDEDALIRILTEPQGAIIKQYQALFGFQGVDLTFSEEALQEVAHRAKERKTGARGLRAVLEKSMTDLLFELPRDDVKEIRFEAEYIDDPLKALESKGLKKSA</sequence>
<reference key="1">
    <citation type="journal article" date="1999" name="Science">
        <title>Genome sequence of the radioresistant bacterium Deinococcus radiodurans R1.</title>
        <authorList>
            <person name="White O."/>
            <person name="Eisen J.A."/>
            <person name="Heidelberg J.F."/>
            <person name="Hickey E.K."/>
            <person name="Peterson J.D."/>
            <person name="Dodson R.J."/>
            <person name="Haft D.H."/>
            <person name="Gwinn M.L."/>
            <person name="Nelson W.C."/>
            <person name="Richardson D.L."/>
            <person name="Moffat K.S."/>
            <person name="Qin H."/>
            <person name="Jiang L."/>
            <person name="Pamphile W."/>
            <person name="Crosby M."/>
            <person name="Shen M."/>
            <person name="Vamathevan J.J."/>
            <person name="Lam P."/>
            <person name="McDonald L.A."/>
            <person name="Utterback T.R."/>
            <person name="Zalewski C."/>
            <person name="Makarova K.S."/>
            <person name="Aravind L."/>
            <person name="Daly M.J."/>
            <person name="Minton K.W."/>
            <person name="Fleischmann R.D."/>
            <person name="Ketchum K.A."/>
            <person name="Nelson K.E."/>
            <person name="Salzberg S.L."/>
            <person name="Smith H.O."/>
            <person name="Venter J.C."/>
            <person name="Fraser C.M."/>
        </authorList>
    </citation>
    <scope>NUCLEOTIDE SEQUENCE [LARGE SCALE GENOMIC DNA]</scope>
    <source>
        <strain>ATCC 13939 / DSM 20539 / JCM 16871 / CCUG 27074 / LMG 4051 / NBRC 15346 / NCIMB 9279 / VKM B-1422 / R1</strain>
    </source>
</reference>
<evidence type="ECO:0000255" key="1">
    <source>
        <dbReference type="HAMAP-Rule" id="MF_00175"/>
    </source>
</evidence>
<evidence type="ECO:0000255" key="2">
    <source>
        <dbReference type="PROSITE-ProRule" id="PRU01250"/>
    </source>
</evidence>
<keyword id="KW-0067">ATP-binding</keyword>
<keyword id="KW-0143">Chaperone</keyword>
<keyword id="KW-0479">Metal-binding</keyword>
<keyword id="KW-0547">Nucleotide-binding</keyword>
<keyword id="KW-1185">Reference proteome</keyword>
<keyword id="KW-0862">Zinc</keyword>
<name>CLPX_DEIRA</name>
<dbReference type="EMBL" id="AE000513">
    <property type="protein sequence ID" value="AAF11525.1"/>
    <property type="molecule type" value="Genomic_DNA"/>
</dbReference>
<dbReference type="PIR" id="F75331">
    <property type="entry name" value="F75331"/>
</dbReference>
<dbReference type="RefSeq" id="NP_295696.1">
    <property type="nucleotide sequence ID" value="NC_001263.1"/>
</dbReference>
<dbReference type="RefSeq" id="WP_010888606.1">
    <property type="nucleotide sequence ID" value="NC_001263.1"/>
</dbReference>
<dbReference type="SMR" id="Q9RSZ6"/>
<dbReference type="FunCoup" id="Q9RSZ6">
    <property type="interactions" value="363"/>
</dbReference>
<dbReference type="STRING" id="243230.DR_1973"/>
<dbReference type="PaxDb" id="243230-DR_1973"/>
<dbReference type="EnsemblBacteria" id="AAF11525">
    <property type="protein sequence ID" value="AAF11525"/>
    <property type="gene ID" value="DR_1973"/>
</dbReference>
<dbReference type="GeneID" id="69518209"/>
<dbReference type="KEGG" id="dra:DR_1973"/>
<dbReference type="PATRIC" id="fig|243230.17.peg.2194"/>
<dbReference type="eggNOG" id="COG1219">
    <property type="taxonomic scope" value="Bacteria"/>
</dbReference>
<dbReference type="HOGENOM" id="CLU_014218_8_2_0"/>
<dbReference type="InParanoid" id="Q9RSZ6"/>
<dbReference type="OrthoDB" id="9804062at2"/>
<dbReference type="Proteomes" id="UP000002524">
    <property type="component" value="Chromosome 1"/>
</dbReference>
<dbReference type="GO" id="GO:0009376">
    <property type="term" value="C:HslUV protease complex"/>
    <property type="evidence" value="ECO:0000318"/>
    <property type="project" value="GO_Central"/>
</dbReference>
<dbReference type="GO" id="GO:0005524">
    <property type="term" value="F:ATP binding"/>
    <property type="evidence" value="ECO:0000318"/>
    <property type="project" value="GO_Central"/>
</dbReference>
<dbReference type="GO" id="GO:0016887">
    <property type="term" value="F:ATP hydrolysis activity"/>
    <property type="evidence" value="ECO:0000318"/>
    <property type="project" value="GO_Central"/>
</dbReference>
<dbReference type="GO" id="GO:0140662">
    <property type="term" value="F:ATP-dependent protein folding chaperone"/>
    <property type="evidence" value="ECO:0007669"/>
    <property type="project" value="InterPro"/>
</dbReference>
<dbReference type="GO" id="GO:0046983">
    <property type="term" value="F:protein dimerization activity"/>
    <property type="evidence" value="ECO:0007669"/>
    <property type="project" value="InterPro"/>
</dbReference>
<dbReference type="GO" id="GO:0051082">
    <property type="term" value="F:unfolded protein binding"/>
    <property type="evidence" value="ECO:0007669"/>
    <property type="project" value="UniProtKB-UniRule"/>
</dbReference>
<dbReference type="GO" id="GO:0008270">
    <property type="term" value="F:zinc ion binding"/>
    <property type="evidence" value="ECO:0007669"/>
    <property type="project" value="InterPro"/>
</dbReference>
<dbReference type="GO" id="GO:0051301">
    <property type="term" value="P:cell division"/>
    <property type="evidence" value="ECO:0000318"/>
    <property type="project" value="GO_Central"/>
</dbReference>
<dbReference type="GO" id="GO:0051603">
    <property type="term" value="P:proteolysis involved in protein catabolic process"/>
    <property type="evidence" value="ECO:0000318"/>
    <property type="project" value="GO_Central"/>
</dbReference>
<dbReference type="CDD" id="cd19497">
    <property type="entry name" value="RecA-like_ClpX"/>
    <property type="match status" value="1"/>
</dbReference>
<dbReference type="FunFam" id="1.10.8.60:FF:000002">
    <property type="entry name" value="ATP-dependent Clp protease ATP-binding subunit ClpX"/>
    <property type="match status" value="1"/>
</dbReference>
<dbReference type="Gene3D" id="1.10.8.60">
    <property type="match status" value="1"/>
</dbReference>
<dbReference type="Gene3D" id="6.20.220.10">
    <property type="entry name" value="ClpX chaperone, C4-type zinc finger domain"/>
    <property type="match status" value="1"/>
</dbReference>
<dbReference type="Gene3D" id="3.40.50.300">
    <property type="entry name" value="P-loop containing nucleotide triphosphate hydrolases"/>
    <property type="match status" value="1"/>
</dbReference>
<dbReference type="HAMAP" id="MF_00175">
    <property type="entry name" value="ClpX"/>
    <property type="match status" value="1"/>
</dbReference>
<dbReference type="InterPro" id="IPR003593">
    <property type="entry name" value="AAA+_ATPase"/>
</dbReference>
<dbReference type="InterPro" id="IPR050052">
    <property type="entry name" value="ATP-dep_Clp_protease_ClpX"/>
</dbReference>
<dbReference type="InterPro" id="IPR003959">
    <property type="entry name" value="ATPase_AAA_core"/>
</dbReference>
<dbReference type="InterPro" id="IPR019489">
    <property type="entry name" value="Clp_ATPase_C"/>
</dbReference>
<dbReference type="InterPro" id="IPR004487">
    <property type="entry name" value="Clp_protease_ATP-bd_su_ClpX"/>
</dbReference>
<dbReference type="InterPro" id="IPR046425">
    <property type="entry name" value="ClpX_bact"/>
</dbReference>
<dbReference type="InterPro" id="IPR027417">
    <property type="entry name" value="P-loop_NTPase"/>
</dbReference>
<dbReference type="InterPro" id="IPR010603">
    <property type="entry name" value="Znf_CppX_C4"/>
</dbReference>
<dbReference type="InterPro" id="IPR038366">
    <property type="entry name" value="Znf_CppX_C4_sf"/>
</dbReference>
<dbReference type="NCBIfam" id="TIGR00382">
    <property type="entry name" value="clpX"/>
    <property type="match status" value="1"/>
</dbReference>
<dbReference type="NCBIfam" id="NF003745">
    <property type="entry name" value="PRK05342.1"/>
    <property type="match status" value="1"/>
</dbReference>
<dbReference type="PANTHER" id="PTHR48102:SF7">
    <property type="entry name" value="ATP-DEPENDENT CLP PROTEASE ATP-BINDING SUBUNIT CLPX-LIKE, MITOCHONDRIAL"/>
    <property type="match status" value="1"/>
</dbReference>
<dbReference type="PANTHER" id="PTHR48102">
    <property type="entry name" value="ATP-DEPENDENT CLP PROTEASE ATP-BINDING SUBUNIT CLPX-LIKE, MITOCHONDRIAL-RELATED"/>
    <property type="match status" value="1"/>
</dbReference>
<dbReference type="Pfam" id="PF07724">
    <property type="entry name" value="AAA_2"/>
    <property type="match status" value="1"/>
</dbReference>
<dbReference type="Pfam" id="PF10431">
    <property type="entry name" value="ClpB_D2-small"/>
    <property type="match status" value="1"/>
</dbReference>
<dbReference type="Pfam" id="PF06689">
    <property type="entry name" value="zf-C4_ClpX"/>
    <property type="match status" value="1"/>
</dbReference>
<dbReference type="SMART" id="SM00382">
    <property type="entry name" value="AAA"/>
    <property type="match status" value="1"/>
</dbReference>
<dbReference type="SMART" id="SM01086">
    <property type="entry name" value="ClpB_D2-small"/>
    <property type="match status" value="1"/>
</dbReference>
<dbReference type="SMART" id="SM00994">
    <property type="entry name" value="zf-C4_ClpX"/>
    <property type="match status" value="1"/>
</dbReference>
<dbReference type="SUPFAM" id="SSF57716">
    <property type="entry name" value="Glucocorticoid receptor-like (DNA-binding domain)"/>
    <property type="match status" value="1"/>
</dbReference>
<dbReference type="SUPFAM" id="SSF52540">
    <property type="entry name" value="P-loop containing nucleoside triphosphate hydrolases"/>
    <property type="match status" value="1"/>
</dbReference>
<dbReference type="PROSITE" id="PS51902">
    <property type="entry name" value="CLPX_ZB"/>
    <property type="match status" value="1"/>
</dbReference>
<protein>
    <recommendedName>
        <fullName evidence="1">ATP-dependent Clp protease ATP-binding subunit ClpX</fullName>
    </recommendedName>
</protein>
<comment type="function">
    <text evidence="1">ATP-dependent specificity component of the Clp protease. It directs the protease to specific substrates. Can perform chaperone functions in the absence of ClpP.</text>
</comment>
<comment type="subunit">
    <text evidence="1">Component of the ClpX-ClpP complex. Forms a hexameric ring that, in the presence of ATP, binds to fourteen ClpP subunits assembled into a disk-like structure with a central cavity, resembling the structure of eukaryotic proteasomes.</text>
</comment>
<comment type="similarity">
    <text evidence="1">Belongs to the ClpX chaperone family.</text>
</comment>
<proteinExistence type="inferred from homology"/>
<accession>Q9RSZ6</accession>
<feature type="chain" id="PRO_0000160349" description="ATP-dependent Clp protease ATP-binding subunit ClpX">
    <location>
        <begin position="1"/>
        <end position="403"/>
    </location>
</feature>
<feature type="domain" description="ClpX-type ZB" evidence="2">
    <location>
        <begin position="1"/>
        <end position="52"/>
    </location>
</feature>
<feature type="binding site" evidence="2">
    <location>
        <position position="9"/>
    </location>
    <ligand>
        <name>Zn(2+)</name>
        <dbReference type="ChEBI" id="CHEBI:29105"/>
    </ligand>
</feature>
<feature type="binding site" evidence="2">
    <location>
        <position position="12"/>
    </location>
    <ligand>
        <name>Zn(2+)</name>
        <dbReference type="ChEBI" id="CHEBI:29105"/>
    </ligand>
</feature>
<feature type="binding site" evidence="2">
    <location>
        <position position="33"/>
    </location>
    <ligand>
        <name>Zn(2+)</name>
        <dbReference type="ChEBI" id="CHEBI:29105"/>
    </ligand>
</feature>
<feature type="binding site" evidence="2">
    <location>
        <position position="36"/>
    </location>
    <ligand>
        <name>Zn(2+)</name>
        <dbReference type="ChEBI" id="CHEBI:29105"/>
    </ligand>
</feature>
<feature type="binding site" evidence="1">
    <location>
        <begin position="112"/>
        <end position="119"/>
    </location>
    <ligand>
        <name>ATP</name>
        <dbReference type="ChEBI" id="CHEBI:30616"/>
    </ligand>
</feature>
<organism>
    <name type="scientific">Deinococcus radiodurans (strain ATCC 13939 / DSM 20539 / JCM 16871 / CCUG 27074 / LMG 4051 / NBRC 15346 / NCIMB 9279 / VKM B-1422 / R1)</name>
    <dbReference type="NCBI Taxonomy" id="243230"/>
    <lineage>
        <taxon>Bacteria</taxon>
        <taxon>Thermotogati</taxon>
        <taxon>Deinococcota</taxon>
        <taxon>Deinococci</taxon>
        <taxon>Deinococcales</taxon>
        <taxon>Deinococcaceae</taxon>
        <taxon>Deinococcus</taxon>
    </lineage>
</organism>